<organism>
    <name type="scientific">Sulfolobus acidocaldarius (strain ATCC 33909 / DSM 639 / JCM 8929 / NBRC 15157 / NCIMB 11770)</name>
    <dbReference type="NCBI Taxonomy" id="330779"/>
    <lineage>
        <taxon>Archaea</taxon>
        <taxon>Thermoproteota</taxon>
        <taxon>Thermoprotei</taxon>
        <taxon>Sulfolobales</taxon>
        <taxon>Sulfolobaceae</taxon>
        <taxon>Sulfolobus</taxon>
    </lineage>
</organism>
<keyword id="KW-0106">Calcium</keyword>
<keyword id="KW-0479">Metal-binding</keyword>
<keyword id="KW-1185">Reference proteome</keyword>
<keyword id="KW-0819">tRNA processing</keyword>
<gene>
    <name type="ordered locus">Saci_0565</name>
</gene>
<comment type="function">
    <text evidence="1">Activates the tRNA-splicing ligase complex by facilitating the enzymatic turnover of catalytic subunit RtcB. Acts by promoting the guanylylation of RtcB, a key intermediate step in tRNA ligation. Can also alter the NTP specificity of RtcB such that ATP, dGTP or ITP is used efficiently (By similarity).</text>
</comment>
<comment type="similarity">
    <text evidence="2">Belongs to the archease family.</text>
</comment>
<feature type="chain" id="PRO_0000068852" description="Protein archease">
    <location>
        <begin position="1"/>
        <end position="139"/>
    </location>
</feature>
<feature type="binding site" evidence="1">
    <location>
        <position position="12"/>
    </location>
    <ligand>
        <name>Ca(2+)</name>
        <dbReference type="ChEBI" id="CHEBI:29108"/>
    </ligand>
</feature>
<feature type="binding site" evidence="1">
    <location>
        <position position="138"/>
    </location>
    <ligand>
        <name>Ca(2+)</name>
        <dbReference type="ChEBI" id="CHEBI:29108"/>
    </ligand>
</feature>
<feature type="binding site" evidence="1">
    <location>
        <position position="139"/>
    </location>
    <ligand>
        <name>Ca(2+)</name>
        <dbReference type="ChEBI" id="CHEBI:29108"/>
    </ligand>
</feature>
<accession>Q4JB72</accession>
<proteinExistence type="inferred from homology"/>
<protein>
    <recommendedName>
        <fullName evidence="2">Protein archease</fullName>
    </recommendedName>
</protein>
<evidence type="ECO:0000250" key="1"/>
<evidence type="ECO:0000255" key="2">
    <source>
        <dbReference type="HAMAP-Rule" id="MF_01222"/>
    </source>
</evidence>
<name>ARCH_SULAC</name>
<sequence>MTRFEFFDHTADIGIIAYGRSLEEAFESAALAVFEVMTDTSKIEYKVEVEIEEIGSDLENLLYRWIESLLVYYDSDLLLFGKFKVSIDLNNMTLKGKAYGEKFNPEKHERRTVVKAMTYHEMLISQNDGTYILRFVVDI</sequence>
<reference key="1">
    <citation type="journal article" date="2005" name="J. Bacteriol.">
        <title>The genome of Sulfolobus acidocaldarius, a model organism of the Crenarchaeota.</title>
        <authorList>
            <person name="Chen L."/>
            <person name="Bruegger K."/>
            <person name="Skovgaard M."/>
            <person name="Redder P."/>
            <person name="She Q."/>
            <person name="Torarinsson E."/>
            <person name="Greve B."/>
            <person name="Awayez M."/>
            <person name="Zibat A."/>
            <person name="Klenk H.-P."/>
            <person name="Garrett R.A."/>
        </authorList>
    </citation>
    <scope>NUCLEOTIDE SEQUENCE [LARGE SCALE GENOMIC DNA]</scope>
    <source>
        <strain>ATCC 33909 / DSM 639 / JCM 8929 / NBRC 15157 / NCIMB 11770</strain>
    </source>
</reference>
<dbReference type="EMBL" id="CP000077">
    <property type="protein sequence ID" value="AAY79957.1"/>
    <property type="molecule type" value="Genomic_DNA"/>
</dbReference>
<dbReference type="RefSeq" id="WP_011277459.1">
    <property type="nucleotide sequence ID" value="NC_007181.1"/>
</dbReference>
<dbReference type="SMR" id="Q4JB72"/>
<dbReference type="STRING" id="330779.Saci_0565"/>
<dbReference type="GeneID" id="14551087"/>
<dbReference type="KEGG" id="sai:Saci_0565"/>
<dbReference type="PATRIC" id="fig|330779.12.peg.546"/>
<dbReference type="eggNOG" id="arCOG04055">
    <property type="taxonomic scope" value="Archaea"/>
</dbReference>
<dbReference type="HOGENOM" id="CLU_111362_3_0_2"/>
<dbReference type="Proteomes" id="UP000001018">
    <property type="component" value="Chromosome"/>
</dbReference>
<dbReference type="GO" id="GO:0005509">
    <property type="term" value="F:calcium ion binding"/>
    <property type="evidence" value="ECO:0007669"/>
    <property type="project" value="UniProtKB-UniRule"/>
</dbReference>
<dbReference type="GO" id="GO:0006388">
    <property type="term" value="P:tRNA splicing, via endonucleolytic cleavage and ligation"/>
    <property type="evidence" value="ECO:0007669"/>
    <property type="project" value="UniProtKB-UniRule"/>
</dbReference>
<dbReference type="Gene3D" id="3.55.10.10">
    <property type="entry name" value="Archease domain"/>
    <property type="match status" value="1"/>
</dbReference>
<dbReference type="HAMAP" id="MF_01222">
    <property type="entry name" value="Archease_arch"/>
    <property type="match status" value="1"/>
</dbReference>
<dbReference type="InterPro" id="IPR002804">
    <property type="entry name" value="Archease"/>
</dbReference>
<dbReference type="InterPro" id="IPR022952">
    <property type="entry name" value="Archease_arc"/>
</dbReference>
<dbReference type="InterPro" id="IPR023572">
    <property type="entry name" value="Archease_dom"/>
</dbReference>
<dbReference type="InterPro" id="IPR036820">
    <property type="entry name" value="Archease_dom_sf"/>
</dbReference>
<dbReference type="NCBIfam" id="NF001617">
    <property type="entry name" value="PRK00407.1"/>
    <property type="match status" value="1"/>
</dbReference>
<dbReference type="PANTHER" id="PTHR12682">
    <property type="entry name" value="ARCHEASE"/>
    <property type="match status" value="1"/>
</dbReference>
<dbReference type="PANTHER" id="PTHR12682:SF11">
    <property type="entry name" value="PROTEIN ARCHEASE"/>
    <property type="match status" value="1"/>
</dbReference>
<dbReference type="Pfam" id="PF01951">
    <property type="entry name" value="Archease"/>
    <property type="match status" value="1"/>
</dbReference>
<dbReference type="SUPFAM" id="SSF69819">
    <property type="entry name" value="MTH1598-like"/>
    <property type="match status" value="1"/>
</dbReference>